<organism>
    <name type="scientific">Escherichia coli O157:H7</name>
    <dbReference type="NCBI Taxonomy" id="83334"/>
    <lineage>
        <taxon>Bacteria</taxon>
        <taxon>Pseudomonadati</taxon>
        <taxon>Pseudomonadota</taxon>
        <taxon>Gammaproteobacteria</taxon>
        <taxon>Enterobacterales</taxon>
        <taxon>Enterobacteriaceae</taxon>
        <taxon>Escherichia</taxon>
    </lineage>
</organism>
<keyword id="KW-0997">Cell inner membrane</keyword>
<keyword id="KW-1003">Cell membrane</keyword>
<keyword id="KW-0963">Cytoplasm</keyword>
<keyword id="KW-0342">GTP-binding</keyword>
<keyword id="KW-0472">Membrane</keyword>
<keyword id="KW-0547">Nucleotide-binding</keyword>
<keyword id="KW-1185">Reference proteome</keyword>
<keyword id="KW-0690">Ribosome biogenesis</keyword>
<keyword id="KW-0694">RNA-binding</keyword>
<keyword id="KW-0699">rRNA-binding</keyword>
<comment type="function">
    <text evidence="1">An essential GTPase that binds both GDP and GTP, with rapid nucleotide exchange. Plays a role in 16S rRNA processing and 30S ribosomal subunit biogenesis and possibly also in cell cycle regulation and energy metabolism.</text>
</comment>
<comment type="subunit">
    <text evidence="1">Monomer.</text>
</comment>
<comment type="subcellular location">
    <subcellularLocation>
        <location>Cytoplasm</location>
    </subcellularLocation>
    <subcellularLocation>
        <location evidence="1">Cell inner membrane</location>
        <topology evidence="1">Peripheral membrane protein</topology>
    </subcellularLocation>
</comment>
<comment type="similarity">
    <text evidence="1 2">Belongs to the TRAFAC class TrmE-Era-EngA-EngB-Septin-like GTPase superfamily. Era GTPase family.</text>
</comment>
<feature type="chain" id="PRO_0000180014" description="GTPase Era">
    <location>
        <begin position="1"/>
        <end position="301"/>
    </location>
</feature>
<feature type="domain" description="Era-type G" evidence="2">
    <location>
        <begin position="7"/>
        <end position="175"/>
    </location>
</feature>
<feature type="domain" description="KH type-2" evidence="1">
    <location>
        <begin position="206"/>
        <end position="283"/>
    </location>
</feature>
<feature type="region of interest" description="G1" evidence="2">
    <location>
        <begin position="15"/>
        <end position="22"/>
    </location>
</feature>
<feature type="region of interest" description="G2" evidence="2">
    <location>
        <begin position="41"/>
        <end position="45"/>
    </location>
</feature>
<feature type="region of interest" description="G3" evidence="2">
    <location>
        <begin position="62"/>
        <end position="65"/>
    </location>
</feature>
<feature type="region of interest" description="G4" evidence="2">
    <location>
        <begin position="124"/>
        <end position="127"/>
    </location>
</feature>
<feature type="region of interest" description="G5" evidence="2">
    <location>
        <begin position="154"/>
        <end position="156"/>
    </location>
</feature>
<feature type="binding site" evidence="1">
    <location>
        <begin position="15"/>
        <end position="22"/>
    </location>
    <ligand>
        <name>GTP</name>
        <dbReference type="ChEBI" id="CHEBI:37565"/>
    </ligand>
</feature>
<feature type="binding site" evidence="1">
    <location>
        <begin position="62"/>
        <end position="66"/>
    </location>
    <ligand>
        <name>GTP</name>
        <dbReference type="ChEBI" id="CHEBI:37565"/>
    </ligand>
</feature>
<feature type="binding site" evidence="1">
    <location>
        <begin position="124"/>
        <end position="127"/>
    </location>
    <ligand>
        <name>GTP</name>
        <dbReference type="ChEBI" id="CHEBI:37565"/>
    </ligand>
</feature>
<reference key="1">
    <citation type="journal article" date="2001" name="Nature">
        <title>Genome sequence of enterohaemorrhagic Escherichia coli O157:H7.</title>
        <authorList>
            <person name="Perna N.T."/>
            <person name="Plunkett G. III"/>
            <person name="Burland V."/>
            <person name="Mau B."/>
            <person name="Glasner J.D."/>
            <person name="Rose D.J."/>
            <person name="Mayhew G.F."/>
            <person name="Evans P.S."/>
            <person name="Gregor J."/>
            <person name="Kirkpatrick H.A."/>
            <person name="Posfai G."/>
            <person name="Hackett J."/>
            <person name="Klink S."/>
            <person name="Boutin A."/>
            <person name="Shao Y."/>
            <person name="Miller L."/>
            <person name="Grotbeck E.J."/>
            <person name="Davis N.W."/>
            <person name="Lim A."/>
            <person name="Dimalanta E.T."/>
            <person name="Potamousis K."/>
            <person name="Apodaca J."/>
            <person name="Anantharaman T.S."/>
            <person name="Lin J."/>
            <person name="Yen G."/>
            <person name="Schwartz D.C."/>
            <person name="Welch R.A."/>
            <person name="Blattner F.R."/>
        </authorList>
    </citation>
    <scope>NUCLEOTIDE SEQUENCE [LARGE SCALE GENOMIC DNA]</scope>
    <source>
        <strain>O157:H7 / EDL933 / ATCC 700927 / EHEC</strain>
    </source>
</reference>
<reference key="2">
    <citation type="journal article" date="2001" name="DNA Res.">
        <title>Complete genome sequence of enterohemorrhagic Escherichia coli O157:H7 and genomic comparison with a laboratory strain K-12.</title>
        <authorList>
            <person name="Hayashi T."/>
            <person name="Makino K."/>
            <person name="Ohnishi M."/>
            <person name="Kurokawa K."/>
            <person name="Ishii K."/>
            <person name="Yokoyama K."/>
            <person name="Han C.-G."/>
            <person name="Ohtsubo E."/>
            <person name="Nakayama K."/>
            <person name="Murata T."/>
            <person name="Tanaka M."/>
            <person name="Tobe T."/>
            <person name="Iida T."/>
            <person name="Takami H."/>
            <person name="Honda T."/>
            <person name="Sasakawa C."/>
            <person name="Ogasawara N."/>
            <person name="Yasunaga T."/>
            <person name="Kuhara S."/>
            <person name="Shiba T."/>
            <person name="Hattori M."/>
            <person name="Shinagawa H."/>
        </authorList>
    </citation>
    <scope>NUCLEOTIDE SEQUENCE [LARGE SCALE GENOMIC DNA]</scope>
    <source>
        <strain>O157:H7 / Sakai / RIMD 0509952 / EHEC</strain>
    </source>
</reference>
<protein>
    <recommendedName>
        <fullName evidence="1">GTPase Era</fullName>
    </recommendedName>
</protein>
<accession>P58070</accession>
<gene>
    <name evidence="1" type="primary">era</name>
    <name type="ordered locus">Z3847</name>
    <name type="ordered locus">ECs3432</name>
</gene>
<evidence type="ECO:0000255" key="1">
    <source>
        <dbReference type="HAMAP-Rule" id="MF_00367"/>
    </source>
</evidence>
<evidence type="ECO:0000255" key="2">
    <source>
        <dbReference type="PROSITE-ProRule" id="PRU01050"/>
    </source>
</evidence>
<name>ERA_ECO57</name>
<proteinExistence type="inferred from homology"/>
<sequence length="301" mass="33766">MSIDKSYCGFIAIVGRPNVGKSTLLNKLLGQKISITSRKAQTTRHRIVGIHTEGAYQAIYVDTPGLHMEEKRAINRLMNKAASSSIGDVELVIFVVEGTRWTPDDEMVLNKLREGKAPVILAVNKVDNVQEKADLLPHLQFLASQMNFLDIVPISAETGLNVATIAAIVRKHLPEATHHFPEDYITDRSQRFMASEIIREKLMRFLGAELPYSVTVEIERFVSNERGGYDINGLILVEREGQKKMVIGNKGAKIKTIGIEARKDMQEMFEAPVHLELWVKVKSGWADDERALRSLGYVDDL</sequence>
<dbReference type="EMBL" id="AE005174">
    <property type="protein sequence ID" value="AAG57681.1"/>
    <property type="molecule type" value="Genomic_DNA"/>
</dbReference>
<dbReference type="EMBL" id="BA000007">
    <property type="protein sequence ID" value="BAB36855.1"/>
    <property type="molecule type" value="Genomic_DNA"/>
</dbReference>
<dbReference type="PIR" id="E85902">
    <property type="entry name" value="E85902"/>
</dbReference>
<dbReference type="PIR" id="H91057">
    <property type="entry name" value="H91057"/>
</dbReference>
<dbReference type="RefSeq" id="NP_311459.1">
    <property type="nucleotide sequence ID" value="NC_002695.1"/>
</dbReference>
<dbReference type="RefSeq" id="WP_000020744.1">
    <property type="nucleotide sequence ID" value="NZ_VOAI01000001.1"/>
</dbReference>
<dbReference type="SMR" id="P58070"/>
<dbReference type="STRING" id="155864.Z3847"/>
<dbReference type="GeneID" id="914890"/>
<dbReference type="KEGG" id="ece:Z3847"/>
<dbReference type="KEGG" id="ecs:ECs_3432"/>
<dbReference type="PATRIC" id="fig|386585.9.peg.3586"/>
<dbReference type="eggNOG" id="COG1159">
    <property type="taxonomic scope" value="Bacteria"/>
</dbReference>
<dbReference type="HOGENOM" id="CLU_038009_1_2_6"/>
<dbReference type="OMA" id="WAEVDVI"/>
<dbReference type="Proteomes" id="UP000000558">
    <property type="component" value="Chromosome"/>
</dbReference>
<dbReference type="Proteomes" id="UP000002519">
    <property type="component" value="Chromosome"/>
</dbReference>
<dbReference type="GO" id="GO:0005829">
    <property type="term" value="C:cytosol"/>
    <property type="evidence" value="ECO:0007669"/>
    <property type="project" value="TreeGrafter"/>
</dbReference>
<dbReference type="GO" id="GO:0005886">
    <property type="term" value="C:plasma membrane"/>
    <property type="evidence" value="ECO:0007669"/>
    <property type="project" value="UniProtKB-SubCell"/>
</dbReference>
<dbReference type="GO" id="GO:0005525">
    <property type="term" value="F:GTP binding"/>
    <property type="evidence" value="ECO:0007669"/>
    <property type="project" value="UniProtKB-UniRule"/>
</dbReference>
<dbReference type="GO" id="GO:0003924">
    <property type="term" value="F:GTPase activity"/>
    <property type="evidence" value="ECO:0007669"/>
    <property type="project" value="UniProtKB-UniRule"/>
</dbReference>
<dbReference type="GO" id="GO:0043024">
    <property type="term" value="F:ribosomal small subunit binding"/>
    <property type="evidence" value="ECO:0007669"/>
    <property type="project" value="TreeGrafter"/>
</dbReference>
<dbReference type="GO" id="GO:0070181">
    <property type="term" value="F:small ribosomal subunit rRNA binding"/>
    <property type="evidence" value="ECO:0007669"/>
    <property type="project" value="UniProtKB-UniRule"/>
</dbReference>
<dbReference type="GO" id="GO:0000028">
    <property type="term" value="P:ribosomal small subunit assembly"/>
    <property type="evidence" value="ECO:0007669"/>
    <property type="project" value="TreeGrafter"/>
</dbReference>
<dbReference type="CDD" id="cd04163">
    <property type="entry name" value="Era"/>
    <property type="match status" value="1"/>
</dbReference>
<dbReference type="CDD" id="cd22534">
    <property type="entry name" value="KH-II_Era"/>
    <property type="match status" value="1"/>
</dbReference>
<dbReference type="FunFam" id="3.30.300.20:FF:000003">
    <property type="entry name" value="GTPase Era"/>
    <property type="match status" value="1"/>
</dbReference>
<dbReference type="FunFam" id="3.40.50.300:FF:000094">
    <property type="entry name" value="GTPase Era"/>
    <property type="match status" value="1"/>
</dbReference>
<dbReference type="Gene3D" id="3.30.300.20">
    <property type="match status" value="1"/>
</dbReference>
<dbReference type="Gene3D" id="3.40.50.300">
    <property type="entry name" value="P-loop containing nucleotide triphosphate hydrolases"/>
    <property type="match status" value="1"/>
</dbReference>
<dbReference type="HAMAP" id="MF_00367">
    <property type="entry name" value="GTPase_Era"/>
    <property type="match status" value="1"/>
</dbReference>
<dbReference type="InterPro" id="IPR030388">
    <property type="entry name" value="G_ERA_dom"/>
</dbReference>
<dbReference type="InterPro" id="IPR006073">
    <property type="entry name" value="GTP-bd"/>
</dbReference>
<dbReference type="InterPro" id="IPR005662">
    <property type="entry name" value="GTPase_Era-like"/>
</dbReference>
<dbReference type="InterPro" id="IPR015946">
    <property type="entry name" value="KH_dom-like_a/b"/>
</dbReference>
<dbReference type="InterPro" id="IPR004044">
    <property type="entry name" value="KH_dom_type_2"/>
</dbReference>
<dbReference type="InterPro" id="IPR009019">
    <property type="entry name" value="KH_sf_prok-type"/>
</dbReference>
<dbReference type="InterPro" id="IPR027417">
    <property type="entry name" value="P-loop_NTPase"/>
</dbReference>
<dbReference type="InterPro" id="IPR005225">
    <property type="entry name" value="Small_GTP-bd"/>
</dbReference>
<dbReference type="NCBIfam" id="TIGR00436">
    <property type="entry name" value="era"/>
    <property type="match status" value="1"/>
</dbReference>
<dbReference type="NCBIfam" id="NF000908">
    <property type="entry name" value="PRK00089.1"/>
    <property type="match status" value="1"/>
</dbReference>
<dbReference type="NCBIfam" id="TIGR00231">
    <property type="entry name" value="small_GTP"/>
    <property type="match status" value="1"/>
</dbReference>
<dbReference type="PANTHER" id="PTHR42698">
    <property type="entry name" value="GTPASE ERA"/>
    <property type="match status" value="1"/>
</dbReference>
<dbReference type="PANTHER" id="PTHR42698:SF1">
    <property type="entry name" value="GTPASE ERA, MITOCHONDRIAL"/>
    <property type="match status" value="1"/>
</dbReference>
<dbReference type="Pfam" id="PF07650">
    <property type="entry name" value="KH_2"/>
    <property type="match status" value="1"/>
</dbReference>
<dbReference type="Pfam" id="PF01926">
    <property type="entry name" value="MMR_HSR1"/>
    <property type="match status" value="1"/>
</dbReference>
<dbReference type="SUPFAM" id="SSF52540">
    <property type="entry name" value="P-loop containing nucleoside triphosphate hydrolases"/>
    <property type="match status" value="1"/>
</dbReference>
<dbReference type="SUPFAM" id="SSF54814">
    <property type="entry name" value="Prokaryotic type KH domain (KH-domain type II)"/>
    <property type="match status" value="1"/>
</dbReference>
<dbReference type="PROSITE" id="PS51713">
    <property type="entry name" value="G_ERA"/>
    <property type="match status" value="1"/>
</dbReference>
<dbReference type="PROSITE" id="PS50823">
    <property type="entry name" value="KH_TYPE_2"/>
    <property type="match status" value="1"/>
</dbReference>